<dbReference type="EMBL" id="X51452">
    <property type="protein sequence ID" value="CAA35818.1"/>
    <property type="molecule type" value="Genomic_DNA"/>
</dbReference>
<dbReference type="PIR" id="S12749">
    <property type="entry name" value="S12749"/>
</dbReference>
<dbReference type="RefSeq" id="WP_002913505.1">
    <property type="nucleotide sequence ID" value="NZ_WYAM01000007.1"/>
</dbReference>
<dbReference type="SMR" id="P16481"/>
<dbReference type="GeneID" id="98389619"/>
<dbReference type="OMA" id="APHGIHT"/>
<dbReference type="GO" id="GO:0005737">
    <property type="term" value="C:cytoplasm"/>
    <property type="evidence" value="ECO:0007669"/>
    <property type="project" value="UniProtKB-SubCell"/>
</dbReference>
<dbReference type="GO" id="GO:0009401">
    <property type="term" value="P:phosphoenolpyruvate-dependent sugar phosphotransferase system"/>
    <property type="evidence" value="ECO:0007669"/>
    <property type="project" value="UniProtKB-KW"/>
</dbReference>
<dbReference type="CDD" id="cd00367">
    <property type="entry name" value="PTS-HPr_like"/>
    <property type="match status" value="1"/>
</dbReference>
<dbReference type="FunFam" id="3.30.1340.10:FF:000001">
    <property type="entry name" value="Phosphocarrier, HPr family"/>
    <property type="match status" value="1"/>
</dbReference>
<dbReference type="Gene3D" id="3.30.1340.10">
    <property type="entry name" value="HPr-like"/>
    <property type="match status" value="1"/>
</dbReference>
<dbReference type="InterPro" id="IPR050399">
    <property type="entry name" value="HPr"/>
</dbReference>
<dbReference type="InterPro" id="IPR000032">
    <property type="entry name" value="HPr-like"/>
</dbReference>
<dbReference type="InterPro" id="IPR035895">
    <property type="entry name" value="HPr-like_sf"/>
</dbReference>
<dbReference type="InterPro" id="IPR001020">
    <property type="entry name" value="PTS_HPr_His_P_site"/>
</dbReference>
<dbReference type="InterPro" id="IPR002114">
    <property type="entry name" value="PTS_HPr_Ser_P_site"/>
</dbReference>
<dbReference type="NCBIfam" id="NF008104">
    <property type="entry name" value="PRK10850.1"/>
    <property type="match status" value="1"/>
</dbReference>
<dbReference type="NCBIfam" id="TIGR01003">
    <property type="entry name" value="PTS_HPr_family"/>
    <property type="match status" value="1"/>
</dbReference>
<dbReference type="PANTHER" id="PTHR33705">
    <property type="entry name" value="PHOSPHOCARRIER PROTEIN HPR"/>
    <property type="match status" value="1"/>
</dbReference>
<dbReference type="PANTHER" id="PTHR33705:SF1">
    <property type="entry name" value="PHOSPHOCARRIER PROTEIN HPR"/>
    <property type="match status" value="1"/>
</dbReference>
<dbReference type="Pfam" id="PF00381">
    <property type="entry name" value="PTS-HPr"/>
    <property type="match status" value="1"/>
</dbReference>
<dbReference type="PRINTS" id="PR00107">
    <property type="entry name" value="PHOSPHOCPHPR"/>
</dbReference>
<dbReference type="SUPFAM" id="SSF55594">
    <property type="entry name" value="HPr-like"/>
    <property type="match status" value="1"/>
</dbReference>
<dbReference type="PROSITE" id="PS51350">
    <property type="entry name" value="PTS_HPR_DOM"/>
    <property type="match status" value="1"/>
</dbReference>
<dbReference type="PROSITE" id="PS00369">
    <property type="entry name" value="PTS_HPR_HIS"/>
    <property type="match status" value="1"/>
</dbReference>
<dbReference type="PROSITE" id="PS00589">
    <property type="entry name" value="PTS_HPR_SER"/>
    <property type="match status" value="1"/>
</dbReference>
<name>PTHP_KLEPN</name>
<reference key="1">
    <citation type="journal article" date="1990" name="Nucleic Acids Res.">
        <title>The nucleotide sequence of ptsH gene from Klebsiella pneumoniae.</title>
        <authorList>
            <person name="Titgemeyer F."/>
            <person name="Eisermann R."/>
            <person name="Hengstenberg W."/>
            <person name="Lengeler J.W."/>
        </authorList>
    </citation>
    <scope>NUCLEOTIDE SEQUENCE [GENOMIC DNA]</scope>
    <source>
        <strain>1033-5P14 / KAY2026</strain>
    </source>
</reference>
<accession>P16481</accession>
<evidence type="ECO:0000250" key="1"/>
<evidence type="ECO:0000255" key="2">
    <source>
        <dbReference type="PROSITE-ProRule" id="PRU00681"/>
    </source>
</evidence>
<gene>
    <name type="primary">ptsH</name>
</gene>
<proteinExistence type="inferred from homology"/>
<comment type="function">
    <text evidence="1">General (non sugar-specific) component of the phosphoenolpyruvate-dependent sugar phosphotransferase system (sugar PTS). This major carbohydrate active-transport system catalyzes the phosphorylation of incoming sugar substrates concomitantly with their translocation across the cell membrane. The phosphoryl group from phosphoenolpyruvate (PEP) is transferred to the phosphoryl carrier protein HPr by enzyme I. Phospho-HPr then transfers it to the PTS EIIA domain.</text>
</comment>
<comment type="subcellular location">
    <subcellularLocation>
        <location>Cytoplasm</location>
    </subcellularLocation>
</comment>
<keyword id="KW-0963">Cytoplasm</keyword>
<keyword id="KW-0598">Phosphotransferase system</keyword>
<keyword id="KW-0762">Sugar transport</keyword>
<keyword id="KW-0813">Transport</keyword>
<sequence length="85" mass="9119">MFQQEVTITAPNGLHTRPAAQFVKEAKGFTSEITVTSNGKSASAKSLFKLQTLGLTQGTVVTLSAEGEDEQKAVEHLVKLMAELE</sequence>
<organism>
    <name type="scientific">Klebsiella pneumoniae</name>
    <dbReference type="NCBI Taxonomy" id="573"/>
    <lineage>
        <taxon>Bacteria</taxon>
        <taxon>Pseudomonadati</taxon>
        <taxon>Pseudomonadota</taxon>
        <taxon>Gammaproteobacteria</taxon>
        <taxon>Enterobacterales</taxon>
        <taxon>Enterobacteriaceae</taxon>
        <taxon>Klebsiella/Raoultella group</taxon>
        <taxon>Klebsiella</taxon>
        <taxon>Klebsiella pneumoniae complex</taxon>
    </lineage>
</organism>
<feature type="chain" id="PRO_0000107855" description="Phosphocarrier protein HPr">
    <location>
        <begin position="1"/>
        <end position="85"/>
    </location>
</feature>
<feature type="domain" description="HPr" evidence="2">
    <location>
        <begin position="1"/>
        <end position="85"/>
    </location>
</feature>
<feature type="active site" description="Pros-phosphohistidine intermediate" evidence="2">
    <location>
        <position position="15"/>
    </location>
</feature>
<protein>
    <recommendedName>
        <fullName>Phosphocarrier protein HPr</fullName>
    </recommendedName>
    <alternativeName>
        <fullName>Histidine-containing protein</fullName>
    </alternativeName>
</protein>